<gene>
    <name type="primary">WDR74</name>
    <name type="synonym">NSA1</name>
</gene>
<sequence>MAAAAARWNHVWVGTETGILKGVNLQRKQAANFTAGGQPRREEAVSALCWGTGGETQMLVGCADRTVKHFSTEDGIFQGQRHCPGGEGMFRGLAQADGTLITCVDSGILRVWHDKDKDTSSDPLLELRVGPGVCRMRQDPAHPHVVATGGKENALKIWDLQGSEEPVFRAKNVRNDWLDLRVPIWDQDIQFLPGSQKLVTCTGYHQVRVYDPASPQRRPVLETTYGEYPLTAMTLTPGGNSVIVGNTHGQLAEIDLRQGRLLGCLKGLAGSVRGLQCHPSKPLLASCGLDRVLRIHRIQNPRGLEHKVYLKSQLNCLLLSGRDNWEDEPQEPQEPNKVPLEDTETDELWASLEAAAKRKLSGLEQPQGALQTRRRKKKRPGSTSP</sequence>
<comment type="function">
    <text evidence="1 4 6">Regulatory protein of the MTREX-exosome complex involved in the synthesis of the 60S ribosomal subunit (PubMed:26456651). Participates in an early cleavage of the pre-rRNA processing pathway in cooperation with NVL (PubMed:29107693). Required for blastocyst formation, is necessary for RNA transcription, processing and/or stability during preimplantation development (By similarity).</text>
</comment>
<comment type="subunit">
    <text evidence="4 5 6">Isoform 1 interacts (through WDR repeats) with NVL; the interaction is independent of RNA or pre-60S ribosome particles. Isoform 2 does not interact with NVL (PubMed:28416111). Interacts with MTREX; the interaction dissociation in a late stage of rRNA synthesis is required for appropriate maturation of pre-60S particles and depends on the ATPase activity of NVL (PubMed:26456651, PubMed:29107693).</text>
</comment>
<comment type="interaction">
    <interactant intactId="EBI-722366">
        <id>Q6RFH5</id>
    </interactant>
    <interactant intactId="EBI-947779">
        <id>Q96PM5</id>
        <label>RCHY1</label>
    </interactant>
    <organismsDiffer>false</organismsDiffer>
    <experiments>3</experiments>
</comment>
<comment type="subcellular location">
    <subcellularLocation>
        <location evidence="3 4 5 6">Nucleus</location>
        <location evidence="3 4 5 6">Nucleolus</location>
    </subcellularLocation>
    <subcellularLocation>
        <location evidence="5">Nucleus</location>
    </subcellularLocation>
    <text evidence="5">Nucleolar location depends on active PolI transcription of pre-rRNA.</text>
</comment>
<comment type="alternative products">
    <event type="alternative splicing"/>
    <isoform>
        <id>Q6RFH5-1</id>
        <name>1</name>
        <sequence type="displayed"/>
    </isoform>
    <isoform>
        <id>Q6RFH5-2</id>
        <name>2</name>
        <sequence type="described" ref="VSP_011957"/>
    </isoform>
</comment>
<dbReference type="EMBL" id="AY500828">
    <property type="protein sequence ID" value="AAS48499.1"/>
    <property type="molecule type" value="mRNA"/>
</dbReference>
<dbReference type="EMBL" id="AK001301">
    <property type="protein sequence ID" value="BAA91610.1"/>
    <property type="molecule type" value="mRNA"/>
</dbReference>
<dbReference type="EMBL" id="AK025383">
    <property type="protein sequence ID" value="BAB15122.1"/>
    <property type="molecule type" value="mRNA"/>
</dbReference>
<dbReference type="EMBL" id="AK292330">
    <property type="protein sequence ID" value="BAF85019.1"/>
    <property type="molecule type" value="mRNA"/>
</dbReference>
<dbReference type="EMBL" id="BC006351">
    <property type="protein sequence ID" value="AAH06351.1"/>
    <property type="molecule type" value="mRNA"/>
</dbReference>
<dbReference type="CCDS" id="CCDS44630.1">
    <molecule id="Q6RFH5-1"/>
</dbReference>
<dbReference type="CCDS" id="CCDS76421.1">
    <molecule id="Q6RFH5-2"/>
</dbReference>
<dbReference type="RefSeq" id="NP_001294906.1">
    <molecule id="Q6RFH5-2"/>
    <property type="nucleotide sequence ID" value="NM_001307977.1"/>
</dbReference>
<dbReference type="RefSeq" id="NP_001356379.1">
    <molecule id="Q6RFH5-1"/>
    <property type="nucleotide sequence ID" value="NM_001369450.1"/>
</dbReference>
<dbReference type="RefSeq" id="NP_001356380.1">
    <molecule id="Q6RFH5-1"/>
    <property type="nucleotide sequence ID" value="NM_001369451.1"/>
</dbReference>
<dbReference type="RefSeq" id="NP_001356382.1">
    <molecule id="Q6RFH5-1"/>
    <property type="nucleotide sequence ID" value="NM_001369453.1"/>
</dbReference>
<dbReference type="RefSeq" id="NP_060563.2">
    <molecule id="Q6RFH5-1"/>
    <property type="nucleotide sequence ID" value="NM_018093.3"/>
</dbReference>
<dbReference type="RefSeq" id="XP_005274112.1">
    <property type="nucleotide sequence ID" value="XM_005274055.2"/>
</dbReference>
<dbReference type="PDB" id="8FKP">
    <property type="method" value="EM"/>
    <property type="resolution" value="2.85 A"/>
    <property type="chains" value="NQ=1-385"/>
</dbReference>
<dbReference type="PDB" id="8FKR">
    <property type="method" value="EM"/>
    <property type="resolution" value="2.89 A"/>
    <property type="chains" value="NQ=1-385"/>
</dbReference>
<dbReference type="PDB" id="8FKT">
    <property type="method" value="EM"/>
    <property type="resolution" value="2.81 A"/>
    <property type="chains" value="NQ=1-385"/>
</dbReference>
<dbReference type="PDB" id="8FKV">
    <property type="method" value="EM"/>
    <property type="resolution" value="2.47 A"/>
    <property type="chains" value="NQ=1-385"/>
</dbReference>
<dbReference type="PDBsum" id="8FKP"/>
<dbReference type="PDBsum" id="8FKR"/>
<dbReference type="PDBsum" id="8FKT"/>
<dbReference type="PDBsum" id="8FKV"/>
<dbReference type="EMDB" id="EMD-29252"/>
<dbReference type="EMDB" id="EMD-29254"/>
<dbReference type="EMDB" id="EMD-29256"/>
<dbReference type="EMDB" id="EMD-29258"/>
<dbReference type="SMR" id="Q6RFH5"/>
<dbReference type="BioGRID" id="120092">
    <property type="interactions" value="150"/>
</dbReference>
<dbReference type="FunCoup" id="Q6RFH5">
    <property type="interactions" value="2836"/>
</dbReference>
<dbReference type="IntAct" id="Q6RFH5">
    <property type="interactions" value="73"/>
</dbReference>
<dbReference type="MINT" id="Q6RFH5"/>
<dbReference type="STRING" id="9606.ENSP00000432119"/>
<dbReference type="GlyGen" id="Q6RFH5">
    <property type="glycosylation" value="1 site, 1 N-linked glycan (1 site)"/>
</dbReference>
<dbReference type="iPTMnet" id="Q6RFH5"/>
<dbReference type="PhosphoSitePlus" id="Q6RFH5"/>
<dbReference type="SwissPalm" id="Q6RFH5"/>
<dbReference type="BioMuta" id="WDR74"/>
<dbReference type="DMDM" id="55976441"/>
<dbReference type="jPOST" id="Q6RFH5"/>
<dbReference type="MassIVE" id="Q6RFH5"/>
<dbReference type="PaxDb" id="9606-ENSP00000432119"/>
<dbReference type="PeptideAtlas" id="Q6RFH5"/>
<dbReference type="ProteomicsDB" id="67316">
    <molecule id="Q6RFH5-1"/>
</dbReference>
<dbReference type="ProteomicsDB" id="67317">
    <molecule id="Q6RFH5-2"/>
</dbReference>
<dbReference type="Pumba" id="Q6RFH5"/>
<dbReference type="Antibodypedia" id="28811">
    <property type="antibodies" value="201 antibodies from 24 providers"/>
</dbReference>
<dbReference type="DNASU" id="54663"/>
<dbReference type="Ensembl" id="ENST00000278856.9">
    <molecule id="Q6RFH5-1"/>
    <property type="protein sequence ID" value="ENSP00000278856.4"/>
    <property type="gene ID" value="ENSG00000133316.16"/>
</dbReference>
<dbReference type="Ensembl" id="ENST00000311713.11">
    <molecule id="Q6RFH5-2"/>
    <property type="protein sequence ID" value="ENSP00000308931.7"/>
    <property type="gene ID" value="ENSG00000133316.16"/>
</dbReference>
<dbReference type="Ensembl" id="ENST00000525239.5">
    <molecule id="Q6RFH5-1"/>
    <property type="protein sequence ID" value="ENSP00000432119.1"/>
    <property type="gene ID" value="ENSG00000133316.16"/>
</dbReference>
<dbReference type="Ensembl" id="ENST00000529106.5">
    <molecule id="Q6RFH5-1"/>
    <property type="protein sequence ID" value="ENSP00000435726.1"/>
    <property type="gene ID" value="ENSG00000133316.16"/>
</dbReference>
<dbReference type="GeneID" id="54663"/>
<dbReference type="KEGG" id="hsa:54663"/>
<dbReference type="MANE-Select" id="ENST00000278856.9">
    <property type="protein sequence ID" value="ENSP00000278856.4"/>
    <property type="RefSeq nucleotide sequence ID" value="NM_001369450.1"/>
    <property type="RefSeq protein sequence ID" value="NP_001356379.1"/>
</dbReference>
<dbReference type="UCSC" id="uc001nvl.3">
    <molecule id="Q6RFH5-1"/>
    <property type="organism name" value="human"/>
</dbReference>
<dbReference type="AGR" id="HGNC:25529"/>
<dbReference type="CTD" id="54663"/>
<dbReference type="DisGeNET" id="54663"/>
<dbReference type="GeneCards" id="WDR74"/>
<dbReference type="HGNC" id="HGNC:25529">
    <property type="gene designation" value="WDR74"/>
</dbReference>
<dbReference type="HPA" id="ENSG00000133316">
    <property type="expression patterns" value="Tissue enhanced (bone)"/>
</dbReference>
<dbReference type="MIM" id="617947">
    <property type="type" value="gene"/>
</dbReference>
<dbReference type="neXtProt" id="NX_Q6RFH5"/>
<dbReference type="OpenTargets" id="ENSG00000133316"/>
<dbReference type="PharmGKB" id="PA142670578"/>
<dbReference type="VEuPathDB" id="HostDB:ENSG00000133316"/>
<dbReference type="eggNOG" id="KOG3881">
    <property type="taxonomic scope" value="Eukaryota"/>
</dbReference>
<dbReference type="GeneTree" id="ENSGT00390000015119"/>
<dbReference type="HOGENOM" id="CLU_033769_2_0_1"/>
<dbReference type="InParanoid" id="Q6RFH5"/>
<dbReference type="OMA" id="KNVCRMR"/>
<dbReference type="OrthoDB" id="18388at2759"/>
<dbReference type="PAN-GO" id="Q6RFH5">
    <property type="GO annotations" value="3 GO annotations based on evolutionary models"/>
</dbReference>
<dbReference type="PhylomeDB" id="Q6RFH5"/>
<dbReference type="TreeFam" id="TF314666"/>
<dbReference type="PathwayCommons" id="Q6RFH5"/>
<dbReference type="SignaLink" id="Q6RFH5"/>
<dbReference type="BioGRID-ORCS" id="54663">
    <property type="hits" value="651 hits in 1160 CRISPR screens"/>
</dbReference>
<dbReference type="CD-CODE" id="91857CE7">
    <property type="entry name" value="Nucleolus"/>
</dbReference>
<dbReference type="ChiTaRS" id="WDR74">
    <property type="organism name" value="human"/>
</dbReference>
<dbReference type="GenomeRNAi" id="54663"/>
<dbReference type="Pharos" id="Q6RFH5">
    <property type="development level" value="Tbio"/>
</dbReference>
<dbReference type="PRO" id="PR:Q6RFH5"/>
<dbReference type="Proteomes" id="UP000005640">
    <property type="component" value="Chromosome 11"/>
</dbReference>
<dbReference type="RNAct" id="Q6RFH5">
    <property type="molecule type" value="protein"/>
</dbReference>
<dbReference type="Bgee" id="ENSG00000133316">
    <property type="expression patterns" value="Expressed in calcaneal tendon and 184 other cell types or tissues"/>
</dbReference>
<dbReference type="ExpressionAtlas" id="Q6RFH5">
    <property type="expression patterns" value="baseline and differential"/>
</dbReference>
<dbReference type="GO" id="GO:0005730">
    <property type="term" value="C:nucleolus"/>
    <property type="evidence" value="ECO:0000314"/>
    <property type="project" value="HPA"/>
</dbReference>
<dbReference type="GO" id="GO:0005654">
    <property type="term" value="C:nucleoplasm"/>
    <property type="evidence" value="ECO:0000314"/>
    <property type="project" value="HPA"/>
</dbReference>
<dbReference type="GO" id="GO:0005634">
    <property type="term" value="C:nucleus"/>
    <property type="evidence" value="ECO:0000314"/>
    <property type="project" value="UniProtKB"/>
</dbReference>
<dbReference type="GO" id="GO:0030687">
    <property type="term" value="C:preribosome, large subunit precursor"/>
    <property type="evidence" value="ECO:0000318"/>
    <property type="project" value="GO_Central"/>
</dbReference>
<dbReference type="GO" id="GO:0001825">
    <property type="term" value="P:blastocyst formation"/>
    <property type="evidence" value="ECO:0000250"/>
    <property type="project" value="UniProtKB"/>
</dbReference>
<dbReference type="GO" id="GO:0042273">
    <property type="term" value="P:ribosomal large subunit biogenesis"/>
    <property type="evidence" value="ECO:0000315"/>
    <property type="project" value="UniProtKB"/>
</dbReference>
<dbReference type="GO" id="GO:0016070">
    <property type="term" value="P:RNA metabolic process"/>
    <property type="evidence" value="ECO:0000250"/>
    <property type="project" value="UniProtKB"/>
</dbReference>
<dbReference type="GO" id="GO:0006364">
    <property type="term" value="P:rRNA processing"/>
    <property type="evidence" value="ECO:0000315"/>
    <property type="project" value="UniProtKB"/>
</dbReference>
<dbReference type="CDD" id="cd22857">
    <property type="entry name" value="WDR74"/>
    <property type="match status" value="1"/>
</dbReference>
<dbReference type="FunFam" id="2.130.10.10:FF:000214">
    <property type="entry name" value="WD repeat-containing protein 74"/>
    <property type="match status" value="1"/>
</dbReference>
<dbReference type="FunFam" id="2.130.10.10:FF:000287">
    <property type="entry name" value="WD repeat-containing protein 74"/>
    <property type="match status" value="1"/>
</dbReference>
<dbReference type="Gene3D" id="2.130.10.10">
    <property type="entry name" value="YVTN repeat-like/Quinoprotein amine dehydrogenase"/>
    <property type="match status" value="2"/>
</dbReference>
<dbReference type="InterPro" id="IPR015943">
    <property type="entry name" value="WD40/YVTN_repeat-like_dom_sf"/>
</dbReference>
<dbReference type="InterPro" id="IPR036322">
    <property type="entry name" value="WD40_repeat_dom_sf"/>
</dbReference>
<dbReference type="InterPro" id="IPR001680">
    <property type="entry name" value="WD40_rpt"/>
</dbReference>
<dbReference type="InterPro" id="IPR037379">
    <property type="entry name" value="WDR74/Nsa1"/>
</dbReference>
<dbReference type="PANTHER" id="PTHR16038">
    <property type="entry name" value="NOP SEVEN ASSOCIATED PROTEIN 1"/>
    <property type="match status" value="1"/>
</dbReference>
<dbReference type="PANTHER" id="PTHR16038:SF4">
    <property type="entry name" value="WD REPEAT-CONTAINING PROTEIN 74"/>
    <property type="match status" value="1"/>
</dbReference>
<dbReference type="Pfam" id="PF00400">
    <property type="entry name" value="WD40"/>
    <property type="match status" value="1"/>
</dbReference>
<dbReference type="SMART" id="SM00320">
    <property type="entry name" value="WD40"/>
    <property type="match status" value="3"/>
</dbReference>
<dbReference type="SUPFAM" id="SSF50978">
    <property type="entry name" value="WD40 repeat-like"/>
    <property type="match status" value="1"/>
</dbReference>
<name>WDR74_HUMAN</name>
<protein>
    <recommendedName>
        <fullName>WD repeat-containing protein 74</fullName>
    </recommendedName>
    <alternativeName>
        <fullName>NOP seven-associated protein 1</fullName>
    </alternativeName>
</protein>
<accession>Q6RFH5</accession>
<accession>A8K8G5</accession>
<accession>Q9BRC9</accession>
<accession>Q9H6X8</accession>
<accession>Q9NVY2</accession>
<keyword id="KW-0002">3D-structure</keyword>
<keyword id="KW-0025">Alternative splicing</keyword>
<keyword id="KW-0488">Methylation</keyword>
<keyword id="KW-0539">Nucleus</keyword>
<keyword id="KW-0597">Phosphoprotein</keyword>
<keyword id="KW-1267">Proteomics identification</keyword>
<keyword id="KW-1185">Reference proteome</keyword>
<keyword id="KW-0677">Repeat</keyword>
<keyword id="KW-0853">WD repeat</keyword>
<feature type="chain" id="PRO_0000051428" description="WD repeat-containing protein 74">
    <location>
        <begin position="1"/>
        <end position="385"/>
    </location>
</feature>
<feature type="repeat" description="WD 1">
    <location>
        <begin position="40"/>
        <end position="80"/>
    </location>
</feature>
<feature type="repeat" description="WD 2">
    <location>
        <begin position="83"/>
        <end position="122"/>
    </location>
</feature>
<feature type="repeat" description="WD 3">
    <location>
        <begin position="128"/>
        <end position="168"/>
    </location>
</feature>
<feature type="repeat" description="WD 4">
    <location>
        <begin position="179"/>
        <end position="220"/>
    </location>
</feature>
<feature type="repeat" description="WD 5">
    <location>
        <begin position="224"/>
        <end position="266"/>
    </location>
</feature>
<feature type="repeat" description="WD 6">
    <location>
        <begin position="267"/>
        <end position="306"/>
    </location>
</feature>
<feature type="region of interest" description="Required for nucleolar and nuclear location" evidence="5">
    <location>
        <begin position="320"/>
        <end position="385"/>
    </location>
</feature>
<feature type="region of interest" description="Disordered" evidence="2">
    <location>
        <begin position="323"/>
        <end position="345"/>
    </location>
</feature>
<feature type="region of interest" description="Disordered" evidence="2">
    <location>
        <begin position="360"/>
        <end position="385"/>
    </location>
</feature>
<feature type="compositionally biased region" description="Basic residues" evidence="2">
    <location>
        <begin position="372"/>
        <end position="385"/>
    </location>
</feature>
<feature type="modified residue" description="Phosphoserine" evidence="10 11">
    <location>
        <position position="214"/>
    </location>
</feature>
<feature type="modified residue" description="N6-methyllysine" evidence="12">
    <location>
        <position position="311"/>
    </location>
</feature>
<feature type="modified residue" description="Phosphoserine" evidence="9 10 11 13">
    <location>
        <position position="361"/>
    </location>
</feature>
<feature type="splice variant" id="VSP_011957" description="In isoform 2." evidence="7">
    <location>
        <begin position="308"/>
        <end position="326"/>
    </location>
</feature>
<feature type="mutagenesis site" description="Reduces interaction with NVL." evidence="5">
    <original>KNVRND</original>
    <variation>GSGS</variation>
    <location>
        <begin position="171"/>
        <end position="176"/>
    </location>
</feature>
<feature type="mutagenesis site" description="Reduces interaction with NVL." evidence="5">
    <original>W</original>
    <variation>A</variation>
    <location>
        <position position="185"/>
    </location>
</feature>
<feature type="mutagenesis site" description="Reduces interaction with NVL." evidence="5">
    <original>F</original>
    <variation>A</variation>
    <location>
        <position position="191"/>
    </location>
</feature>
<feature type="sequence conflict" description="In Ref. 2; BAA91610." evidence="8" ref="2">
    <original>F</original>
    <variation>L</variation>
    <location>
        <position position="33"/>
    </location>
</feature>
<feature type="sequence conflict" description="In Ref. 2; BAA91610." evidence="8" ref="2">
    <original>P</original>
    <variation>S</variation>
    <location>
        <position position="229"/>
    </location>
</feature>
<feature type="sequence conflict" description="In Ref. 2; BAA91610." evidence="8" ref="2">
    <original>RI</original>
    <variation>GT</variation>
    <location>
        <begin position="297"/>
        <end position="298"/>
    </location>
</feature>
<evidence type="ECO:0000250" key="1">
    <source>
        <dbReference type="UniProtKB" id="Q8VCG3"/>
    </source>
</evidence>
<evidence type="ECO:0000256" key="2">
    <source>
        <dbReference type="SAM" id="MobiDB-lite"/>
    </source>
</evidence>
<evidence type="ECO:0000269" key="3">
    <source>
    </source>
</evidence>
<evidence type="ECO:0000269" key="4">
    <source>
    </source>
</evidence>
<evidence type="ECO:0000269" key="5">
    <source>
    </source>
</evidence>
<evidence type="ECO:0000269" key="6">
    <source>
    </source>
</evidence>
<evidence type="ECO:0000303" key="7">
    <source>
    </source>
</evidence>
<evidence type="ECO:0000305" key="8"/>
<evidence type="ECO:0007744" key="9">
    <source>
    </source>
</evidence>
<evidence type="ECO:0007744" key="10">
    <source>
    </source>
</evidence>
<evidence type="ECO:0007744" key="11">
    <source>
    </source>
</evidence>
<evidence type="ECO:0007744" key="12">
    <source>
    </source>
</evidence>
<evidence type="ECO:0007744" key="13">
    <source>
    </source>
</evidence>
<reference key="1">
    <citation type="submission" date="2003-12" db="EMBL/GenBank/DDBJ databases">
        <authorList>
            <person name="Eilbracht J."/>
            <person name="Hofmann A."/>
            <person name="Schmidt-Zachmann M.S."/>
        </authorList>
    </citation>
    <scope>NUCLEOTIDE SEQUENCE [MRNA] (ISOFORM 1)</scope>
</reference>
<reference key="2">
    <citation type="journal article" date="2004" name="Nat. Genet.">
        <title>Complete sequencing and characterization of 21,243 full-length human cDNAs.</title>
        <authorList>
            <person name="Ota T."/>
            <person name="Suzuki Y."/>
            <person name="Nishikawa T."/>
            <person name="Otsuki T."/>
            <person name="Sugiyama T."/>
            <person name="Irie R."/>
            <person name="Wakamatsu A."/>
            <person name="Hayashi K."/>
            <person name="Sato H."/>
            <person name="Nagai K."/>
            <person name="Kimura K."/>
            <person name="Makita H."/>
            <person name="Sekine M."/>
            <person name="Obayashi M."/>
            <person name="Nishi T."/>
            <person name="Shibahara T."/>
            <person name="Tanaka T."/>
            <person name="Ishii S."/>
            <person name="Yamamoto J."/>
            <person name="Saito K."/>
            <person name="Kawai Y."/>
            <person name="Isono Y."/>
            <person name="Nakamura Y."/>
            <person name="Nagahari K."/>
            <person name="Murakami K."/>
            <person name="Yasuda T."/>
            <person name="Iwayanagi T."/>
            <person name="Wagatsuma M."/>
            <person name="Shiratori A."/>
            <person name="Sudo H."/>
            <person name="Hosoiri T."/>
            <person name="Kaku Y."/>
            <person name="Kodaira H."/>
            <person name="Kondo H."/>
            <person name="Sugawara M."/>
            <person name="Takahashi M."/>
            <person name="Kanda K."/>
            <person name="Yokoi T."/>
            <person name="Furuya T."/>
            <person name="Kikkawa E."/>
            <person name="Omura Y."/>
            <person name="Abe K."/>
            <person name="Kamihara K."/>
            <person name="Katsuta N."/>
            <person name="Sato K."/>
            <person name="Tanikawa M."/>
            <person name="Yamazaki M."/>
            <person name="Ninomiya K."/>
            <person name="Ishibashi T."/>
            <person name="Yamashita H."/>
            <person name="Murakawa K."/>
            <person name="Fujimori K."/>
            <person name="Tanai H."/>
            <person name="Kimata M."/>
            <person name="Watanabe M."/>
            <person name="Hiraoka S."/>
            <person name="Chiba Y."/>
            <person name="Ishida S."/>
            <person name="Ono Y."/>
            <person name="Takiguchi S."/>
            <person name="Watanabe S."/>
            <person name="Yosida M."/>
            <person name="Hotuta T."/>
            <person name="Kusano J."/>
            <person name="Kanehori K."/>
            <person name="Takahashi-Fujii A."/>
            <person name="Hara H."/>
            <person name="Tanase T.-O."/>
            <person name="Nomura Y."/>
            <person name="Togiya S."/>
            <person name="Komai F."/>
            <person name="Hara R."/>
            <person name="Takeuchi K."/>
            <person name="Arita M."/>
            <person name="Imose N."/>
            <person name="Musashino K."/>
            <person name="Yuuki H."/>
            <person name="Oshima A."/>
            <person name="Sasaki N."/>
            <person name="Aotsuka S."/>
            <person name="Yoshikawa Y."/>
            <person name="Matsunawa H."/>
            <person name="Ichihara T."/>
            <person name="Shiohata N."/>
            <person name="Sano S."/>
            <person name="Moriya S."/>
            <person name="Momiyama H."/>
            <person name="Satoh N."/>
            <person name="Takami S."/>
            <person name="Terashima Y."/>
            <person name="Suzuki O."/>
            <person name="Nakagawa S."/>
            <person name="Senoh A."/>
            <person name="Mizoguchi H."/>
            <person name="Goto Y."/>
            <person name="Shimizu F."/>
            <person name="Wakebe H."/>
            <person name="Hishigaki H."/>
            <person name="Watanabe T."/>
            <person name="Sugiyama A."/>
            <person name="Takemoto M."/>
            <person name="Kawakami B."/>
            <person name="Yamazaki M."/>
            <person name="Watanabe K."/>
            <person name="Kumagai A."/>
            <person name="Itakura S."/>
            <person name="Fukuzumi Y."/>
            <person name="Fujimori Y."/>
            <person name="Komiyama M."/>
            <person name="Tashiro H."/>
            <person name="Tanigami A."/>
            <person name="Fujiwara T."/>
            <person name="Ono T."/>
            <person name="Yamada K."/>
            <person name="Fujii Y."/>
            <person name="Ozaki K."/>
            <person name="Hirao M."/>
            <person name="Ohmori Y."/>
            <person name="Kawabata A."/>
            <person name="Hikiji T."/>
            <person name="Kobatake N."/>
            <person name="Inagaki H."/>
            <person name="Ikema Y."/>
            <person name="Okamoto S."/>
            <person name="Okitani R."/>
            <person name="Kawakami T."/>
            <person name="Noguchi S."/>
            <person name="Itoh T."/>
            <person name="Shigeta K."/>
            <person name="Senba T."/>
            <person name="Matsumura K."/>
            <person name="Nakajima Y."/>
            <person name="Mizuno T."/>
            <person name="Morinaga M."/>
            <person name="Sasaki M."/>
            <person name="Togashi T."/>
            <person name="Oyama M."/>
            <person name="Hata H."/>
            <person name="Watanabe M."/>
            <person name="Komatsu T."/>
            <person name="Mizushima-Sugano J."/>
            <person name="Satoh T."/>
            <person name="Shirai Y."/>
            <person name="Takahashi Y."/>
            <person name="Nakagawa K."/>
            <person name="Okumura K."/>
            <person name="Nagase T."/>
            <person name="Nomura N."/>
            <person name="Kikuchi H."/>
            <person name="Masuho Y."/>
            <person name="Yamashita R."/>
            <person name="Nakai K."/>
            <person name="Yada T."/>
            <person name="Nakamura Y."/>
            <person name="Ohara O."/>
            <person name="Isogai T."/>
            <person name="Sugano S."/>
        </authorList>
    </citation>
    <scope>NUCLEOTIDE SEQUENCE [LARGE SCALE MRNA] (ISOFORM 1)</scope>
    <source>
        <tissue>Testis</tissue>
    </source>
</reference>
<reference key="3">
    <citation type="journal article" date="2004" name="Genome Res.">
        <title>The status, quality, and expansion of the NIH full-length cDNA project: the Mammalian Gene Collection (MGC).</title>
        <authorList>
            <consortium name="The MGC Project Team"/>
        </authorList>
    </citation>
    <scope>NUCLEOTIDE SEQUENCE [LARGE SCALE MRNA] (ISOFORM 2)</scope>
    <source>
        <tissue>Muscle</tissue>
    </source>
</reference>
<reference key="4">
    <citation type="journal article" date="2002" name="Mol. Biol. Cell">
        <title>Functional proteomic analysis of human nucleolus.</title>
        <authorList>
            <person name="Scherl A."/>
            <person name="Coute Y."/>
            <person name="Deon C."/>
            <person name="Calle A."/>
            <person name="Kindbeiter K."/>
            <person name="Sanchez J.-C."/>
            <person name="Greco A."/>
            <person name="Hochstrasser D.F."/>
            <person name="Diaz J.-J."/>
        </authorList>
    </citation>
    <scope>SUBCELLULAR LOCATION [LARGE SCALE ANALYSIS]</scope>
    <source>
        <tissue>Cervix carcinoma</tissue>
    </source>
</reference>
<reference key="5">
    <citation type="journal article" date="2008" name="Proc. Natl. Acad. Sci. U.S.A.">
        <title>A quantitative atlas of mitotic phosphorylation.</title>
        <authorList>
            <person name="Dephoure N."/>
            <person name="Zhou C."/>
            <person name="Villen J."/>
            <person name="Beausoleil S.A."/>
            <person name="Bakalarski C.E."/>
            <person name="Elledge S.J."/>
            <person name="Gygi S.P."/>
        </authorList>
    </citation>
    <scope>PHOSPHORYLATION [LARGE SCALE ANALYSIS] AT SER-361</scope>
    <scope>IDENTIFICATION BY MASS SPECTROMETRY [LARGE SCALE ANALYSIS]</scope>
    <source>
        <tissue>Cervix carcinoma</tissue>
    </source>
</reference>
<reference key="6">
    <citation type="journal article" date="2010" name="Sci. Signal.">
        <title>Quantitative phosphoproteomics reveals widespread full phosphorylation site occupancy during mitosis.</title>
        <authorList>
            <person name="Olsen J.V."/>
            <person name="Vermeulen M."/>
            <person name="Santamaria A."/>
            <person name="Kumar C."/>
            <person name="Miller M.L."/>
            <person name="Jensen L.J."/>
            <person name="Gnad F."/>
            <person name="Cox J."/>
            <person name="Jensen T.S."/>
            <person name="Nigg E.A."/>
            <person name="Brunak S."/>
            <person name="Mann M."/>
        </authorList>
    </citation>
    <scope>PHOSPHORYLATION [LARGE SCALE ANALYSIS] AT SER-214 AND SER-361</scope>
    <scope>IDENTIFICATION BY MASS SPECTROMETRY [LARGE SCALE ANALYSIS]</scope>
    <source>
        <tissue>Cervix carcinoma</tissue>
    </source>
</reference>
<reference key="7">
    <citation type="journal article" date="2013" name="J. Proteome Res.">
        <title>Toward a comprehensive characterization of a human cancer cell phosphoproteome.</title>
        <authorList>
            <person name="Zhou H."/>
            <person name="Di Palma S."/>
            <person name="Preisinger C."/>
            <person name="Peng M."/>
            <person name="Polat A.N."/>
            <person name="Heck A.J."/>
            <person name="Mohammed S."/>
        </authorList>
    </citation>
    <scope>PHOSPHORYLATION [LARGE SCALE ANALYSIS] AT SER-214 AND SER-361</scope>
    <scope>IDENTIFICATION BY MASS SPECTROMETRY [LARGE SCALE ANALYSIS]</scope>
    <source>
        <tissue>Cervix carcinoma</tissue>
        <tissue>Erythroleukemia</tissue>
    </source>
</reference>
<reference key="8">
    <citation type="journal article" date="2014" name="J. Proteomics">
        <title>An enzyme assisted RP-RPLC approach for in-depth analysis of human liver phosphoproteome.</title>
        <authorList>
            <person name="Bian Y."/>
            <person name="Song C."/>
            <person name="Cheng K."/>
            <person name="Dong M."/>
            <person name="Wang F."/>
            <person name="Huang J."/>
            <person name="Sun D."/>
            <person name="Wang L."/>
            <person name="Ye M."/>
            <person name="Zou H."/>
        </authorList>
    </citation>
    <scope>PHOSPHORYLATION [LARGE SCALE ANALYSIS] AT SER-361</scope>
    <scope>IDENTIFICATION BY MASS SPECTROMETRY [LARGE SCALE ANALYSIS]</scope>
    <source>
        <tissue>Liver</tissue>
    </source>
</reference>
<reference key="9">
    <citation type="journal article" date="2014" name="Mol. Cell. Proteomics">
        <title>Immunoaffinity enrichment and mass spectrometry analysis of protein methylation.</title>
        <authorList>
            <person name="Guo A."/>
            <person name="Gu H."/>
            <person name="Zhou J."/>
            <person name="Mulhern D."/>
            <person name="Wang Y."/>
            <person name="Lee K.A."/>
            <person name="Yang V."/>
            <person name="Aguiar M."/>
            <person name="Kornhauser J."/>
            <person name="Jia X."/>
            <person name="Ren J."/>
            <person name="Beausoleil S.A."/>
            <person name="Silva J.C."/>
            <person name="Vemulapalli V."/>
            <person name="Bedford M.T."/>
            <person name="Comb M.J."/>
        </authorList>
    </citation>
    <scope>METHYLATION [LARGE SCALE ANALYSIS] AT LYS-311</scope>
    <scope>IDENTIFICATION BY MASS SPECTROMETRY [LARGE SCALE ANALYSIS]</scope>
    <source>
        <tissue>Colon carcinoma</tissue>
    </source>
</reference>
<reference key="10">
    <citation type="journal article" date="2015" name="Biochem. Biophys. Res. Commun.">
        <title>AAA-ATPase NVL2 acts on MTR4-exosome complex to dissociate the nucleolar protein WDR74.</title>
        <authorList>
            <person name="Hiraishi N."/>
            <person name="Ishida Y."/>
            <person name="Nagahama M."/>
        </authorList>
    </citation>
    <scope>FUNCTION</scope>
    <scope>SUBCELLULAR LOCATION</scope>
    <scope>INTERACTION WITH MTREX</scope>
</reference>
<reference key="11">
    <citation type="journal article" date="2017" name="Structure">
        <title>Structural Analysis Reveals Features of Ribosome Assembly Factor Nsa1/WDR74 Important for Localization and Interaction with Rix7/NVL2.</title>
        <authorList>
            <person name="Lo Y.H."/>
            <person name="Romes E.M."/>
            <person name="Pillon M.C."/>
            <person name="Sobhany M."/>
            <person name="Stanley R.E."/>
        </authorList>
    </citation>
    <scope>FUNCTION</scope>
    <scope>SUBCELLULAR LOCATION</scope>
    <scope>INTERACTION WITH NVL</scope>
    <scope>MUTAGENESIS OF 171-LYS--ASP-176; TRP-185 AND PHE-191</scope>
</reference>
<reference key="12">
    <citation type="journal article" date="2018" name="Biochem. Biophys. Res. Commun.">
        <title>WDR74 participates in an early cleavage of the pre-rRNA processing pathway in cooperation with the nucleolar AAA-ATPase NVL2.</title>
        <authorList>
            <person name="Hiraishi N."/>
            <person name="Ishida Y.I."/>
            <person name="Sudo H."/>
            <person name="Nagahama M."/>
        </authorList>
    </citation>
    <scope>FUNCTION</scope>
    <scope>SUBCELLULAR LOCATION</scope>
    <scope>INTERACTION WITH MTREX</scope>
</reference>
<organism>
    <name type="scientific">Homo sapiens</name>
    <name type="common">Human</name>
    <dbReference type="NCBI Taxonomy" id="9606"/>
    <lineage>
        <taxon>Eukaryota</taxon>
        <taxon>Metazoa</taxon>
        <taxon>Chordata</taxon>
        <taxon>Craniata</taxon>
        <taxon>Vertebrata</taxon>
        <taxon>Euteleostomi</taxon>
        <taxon>Mammalia</taxon>
        <taxon>Eutheria</taxon>
        <taxon>Euarchontoglires</taxon>
        <taxon>Primates</taxon>
        <taxon>Haplorrhini</taxon>
        <taxon>Catarrhini</taxon>
        <taxon>Hominidae</taxon>
        <taxon>Homo</taxon>
    </lineage>
</organism>
<proteinExistence type="evidence at protein level"/>